<sequence length="227" mass="24806">MENLKKMAGITAAEFIKDGMVVGLGTGSTAYYFVEEIGRRIKEEGLQITAVTTSSVTSKQAEGLNIPLKSIDQVDFVDVTVDGADEVDSQFNGIKGGGGALLMEKVVATPSKEYIWVVDESKLVEKLGAFKLPVEVVQYGAEQVFRHFERAGYKPSFREKDGQRFVTDMQNFIIDLALDVIENPIAFGQELDHVVGVVEHGLFNQMVDKVIVAGRDGVQISTSKKGK</sequence>
<organism>
    <name type="scientific">Streptococcus pneumoniae serotype 4 (strain ATCC BAA-334 / TIGR4)</name>
    <dbReference type="NCBI Taxonomy" id="170187"/>
    <lineage>
        <taxon>Bacteria</taxon>
        <taxon>Bacillati</taxon>
        <taxon>Bacillota</taxon>
        <taxon>Bacilli</taxon>
        <taxon>Lactobacillales</taxon>
        <taxon>Streptococcaceae</taxon>
        <taxon>Streptococcus</taxon>
    </lineage>
</organism>
<proteinExistence type="inferred from homology"/>
<feature type="chain" id="PRO_0000158474" description="Ribose-5-phosphate isomerase A">
    <location>
        <begin position="1"/>
        <end position="227"/>
    </location>
</feature>
<feature type="active site" description="Proton acceptor" evidence="1">
    <location>
        <position position="104"/>
    </location>
</feature>
<feature type="binding site" evidence="1">
    <location>
        <begin position="26"/>
        <end position="29"/>
    </location>
    <ligand>
        <name>substrate</name>
    </ligand>
</feature>
<feature type="binding site" evidence="1">
    <location>
        <begin position="82"/>
        <end position="85"/>
    </location>
    <ligand>
        <name>substrate</name>
    </ligand>
</feature>
<feature type="binding site" evidence="1">
    <location>
        <begin position="95"/>
        <end position="98"/>
    </location>
    <ligand>
        <name>substrate</name>
    </ligand>
</feature>
<feature type="binding site" evidence="1">
    <location>
        <position position="122"/>
    </location>
    <ligand>
        <name>substrate</name>
    </ligand>
</feature>
<keyword id="KW-0413">Isomerase</keyword>
<keyword id="KW-1185">Reference proteome</keyword>
<gene>
    <name evidence="1" type="primary">rpiA</name>
    <name type="ordered locus">SP_0828</name>
</gene>
<reference key="1">
    <citation type="journal article" date="2001" name="Science">
        <title>Complete genome sequence of a virulent isolate of Streptococcus pneumoniae.</title>
        <authorList>
            <person name="Tettelin H."/>
            <person name="Nelson K.E."/>
            <person name="Paulsen I.T."/>
            <person name="Eisen J.A."/>
            <person name="Read T.D."/>
            <person name="Peterson S.N."/>
            <person name="Heidelberg J.F."/>
            <person name="DeBoy R.T."/>
            <person name="Haft D.H."/>
            <person name="Dodson R.J."/>
            <person name="Durkin A.S."/>
            <person name="Gwinn M.L."/>
            <person name="Kolonay J.F."/>
            <person name="Nelson W.C."/>
            <person name="Peterson J.D."/>
            <person name="Umayam L.A."/>
            <person name="White O."/>
            <person name="Salzberg S.L."/>
            <person name="Lewis M.R."/>
            <person name="Radune D."/>
            <person name="Holtzapple E.K."/>
            <person name="Khouri H.M."/>
            <person name="Wolf A.M."/>
            <person name="Utterback T.R."/>
            <person name="Hansen C.L."/>
            <person name="McDonald L.A."/>
            <person name="Feldblyum T.V."/>
            <person name="Angiuoli S.V."/>
            <person name="Dickinson T."/>
            <person name="Hickey E.K."/>
            <person name="Holt I.E."/>
            <person name="Loftus B.J."/>
            <person name="Yang F."/>
            <person name="Smith H.O."/>
            <person name="Venter J.C."/>
            <person name="Dougherty B.A."/>
            <person name="Morrison D.A."/>
            <person name="Hollingshead S.K."/>
            <person name="Fraser C.M."/>
        </authorList>
    </citation>
    <scope>NUCLEOTIDE SEQUENCE [LARGE SCALE GENOMIC DNA]</scope>
    <source>
        <strain>ATCC BAA-334 / TIGR4</strain>
    </source>
</reference>
<name>RPIA_STRPN</name>
<protein>
    <recommendedName>
        <fullName evidence="1">Ribose-5-phosphate isomerase A</fullName>
        <ecNumber evidence="1">5.3.1.6</ecNumber>
    </recommendedName>
    <alternativeName>
        <fullName evidence="1">Phosphoriboisomerase A</fullName>
        <shortName evidence="1">PRI</shortName>
    </alternativeName>
</protein>
<comment type="function">
    <text evidence="1">Catalyzes the reversible conversion of ribose-5-phosphate to ribulose 5-phosphate.</text>
</comment>
<comment type="catalytic activity">
    <reaction evidence="1">
        <text>aldehydo-D-ribose 5-phosphate = D-ribulose 5-phosphate</text>
        <dbReference type="Rhea" id="RHEA:14657"/>
        <dbReference type="ChEBI" id="CHEBI:58121"/>
        <dbReference type="ChEBI" id="CHEBI:58273"/>
        <dbReference type="EC" id="5.3.1.6"/>
    </reaction>
</comment>
<comment type="pathway">
    <text evidence="1">Carbohydrate degradation; pentose phosphate pathway; D-ribose 5-phosphate from D-ribulose 5-phosphate (non-oxidative stage): step 1/1.</text>
</comment>
<comment type="subunit">
    <text evidence="1">Homodimer.</text>
</comment>
<comment type="similarity">
    <text evidence="1">Belongs to the ribose 5-phosphate isomerase family.</text>
</comment>
<evidence type="ECO:0000255" key="1">
    <source>
        <dbReference type="HAMAP-Rule" id="MF_00170"/>
    </source>
</evidence>
<dbReference type="EC" id="5.3.1.6" evidence="1"/>
<dbReference type="EMBL" id="AE005672">
    <property type="protein sequence ID" value="AAK74959.1"/>
    <property type="molecule type" value="Genomic_DNA"/>
</dbReference>
<dbReference type="PIR" id="F95095">
    <property type="entry name" value="F95095"/>
</dbReference>
<dbReference type="RefSeq" id="WP_000429305.1">
    <property type="nucleotide sequence ID" value="NZ_CP155539.1"/>
</dbReference>
<dbReference type="SMR" id="Q97RI7"/>
<dbReference type="PaxDb" id="170187-SP_0828"/>
<dbReference type="EnsemblBacteria" id="AAK74959">
    <property type="protein sequence ID" value="AAK74959"/>
    <property type="gene ID" value="SP_0828"/>
</dbReference>
<dbReference type="KEGG" id="spn:SP_0828"/>
<dbReference type="eggNOG" id="COG0120">
    <property type="taxonomic scope" value="Bacteria"/>
</dbReference>
<dbReference type="PhylomeDB" id="Q97RI7"/>
<dbReference type="BioCyc" id="SPNE170187:G1FZB-846-MONOMER"/>
<dbReference type="UniPathway" id="UPA00115">
    <property type="reaction ID" value="UER00412"/>
</dbReference>
<dbReference type="Proteomes" id="UP000000585">
    <property type="component" value="Chromosome"/>
</dbReference>
<dbReference type="GO" id="GO:0004751">
    <property type="term" value="F:ribose-5-phosphate isomerase activity"/>
    <property type="evidence" value="ECO:0007669"/>
    <property type="project" value="UniProtKB-UniRule"/>
</dbReference>
<dbReference type="GO" id="GO:0009052">
    <property type="term" value="P:pentose-phosphate shunt, non-oxidative branch"/>
    <property type="evidence" value="ECO:0007669"/>
    <property type="project" value="UniProtKB-UniRule"/>
</dbReference>
<dbReference type="CDD" id="cd01398">
    <property type="entry name" value="RPI_A"/>
    <property type="match status" value="1"/>
</dbReference>
<dbReference type="FunFam" id="3.40.50.1360:FF:000001">
    <property type="entry name" value="Ribose-5-phosphate isomerase A"/>
    <property type="match status" value="1"/>
</dbReference>
<dbReference type="Gene3D" id="3.30.70.260">
    <property type="match status" value="1"/>
</dbReference>
<dbReference type="Gene3D" id="3.40.50.1360">
    <property type="match status" value="1"/>
</dbReference>
<dbReference type="HAMAP" id="MF_00170">
    <property type="entry name" value="Rib_5P_isom_A"/>
    <property type="match status" value="1"/>
</dbReference>
<dbReference type="InterPro" id="IPR037171">
    <property type="entry name" value="NagB/RpiA_transferase-like"/>
</dbReference>
<dbReference type="InterPro" id="IPR050262">
    <property type="entry name" value="Ribose-5P_isomerase"/>
</dbReference>
<dbReference type="InterPro" id="IPR020672">
    <property type="entry name" value="Ribose5P_isomerase_typA_subgr"/>
</dbReference>
<dbReference type="InterPro" id="IPR004788">
    <property type="entry name" value="Ribose5P_isomerase_type_A"/>
</dbReference>
<dbReference type="NCBIfam" id="NF001924">
    <property type="entry name" value="PRK00702.1"/>
    <property type="match status" value="1"/>
</dbReference>
<dbReference type="NCBIfam" id="TIGR00021">
    <property type="entry name" value="rpiA"/>
    <property type="match status" value="1"/>
</dbReference>
<dbReference type="PANTHER" id="PTHR43748">
    <property type="entry name" value="RIBOSE-5-PHOSPHATE ISOMERASE 3, CHLOROPLASTIC-RELATED"/>
    <property type="match status" value="1"/>
</dbReference>
<dbReference type="PANTHER" id="PTHR43748:SF3">
    <property type="entry name" value="RIBOSE-5-PHOSPHATE ISOMERASE 3, CHLOROPLASTIC-RELATED"/>
    <property type="match status" value="1"/>
</dbReference>
<dbReference type="Pfam" id="PF06026">
    <property type="entry name" value="Rib_5-P_isom_A"/>
    <property type="match status" value="1"/>
</dbReference>
<dbReference type="SUPFAM" id="SSF75445">
    <property type="entry name" value="D-ribose-5-phosphate isomerase (RpiA), lid domain"/>
    <property type="match status" value="1"/>
</dbReference>
<dbReference type="SUPFAM" id="SSF100950">
    <property type="entry name" value="NagB/RpiA/CoA transferase-like"/>
    <property type="match status" value="1"/>
</dbReference>
<accession>Q97RI7</accession>